<organism>
    <name type="scientific">Geobacillus thermodenitrificans (strain NG80-2)</name>
    <dbReference type="NCBI Taxonomy" id="420246"/>
    <lineage>
        <taxon>Bacteria</taxon>
        <taxon>Bacillati</taxon>
        <taxon>Bacillota</taxon>
        <taxon>Bacilli</taxon>
        <taxon>Bacillales</taxon>
        <taxon>Anoxybacillaceae</taxon>
        <taxon>Geobacillus</taxon>
    </lineage>
</organism>
<keyword id="KW-0054">Arabinose catabolism</keyword>
<keyword id="KW-0119">Carbohydrate metabolism</keyword>
<keyword id="KW-0413">Isomerase</keyword>
<keyword id="KW-0464">Manganese</keyword>
<keyword id="KW-0479">Metal-binding</keyword>
<dbReference type="EC" id="5.3.1.4" evidence="1"/>
<dbReference type="EMBL" id="CP000557">
    <property type="protein sequence ID" value="ABO67155.1"/>
    <property type="molecule type" value="Genomic_DNA"/>
</dbReference>
<dbReference type="RefSeq" id="WP_011887523.1">
    <property type="nucleotide sequence ID" value="NC_009328.1"/>
</dbReference>
<dbReference type="SMR" id="A4IPA1"/>
<dbReference type="KEGG" id="gtn:GTNG_1795"/>
<dbReference type="eggNOG" id="COG2160">
    <property type="taxonomic scope" value="Bacteria"/>
</dbReference>
<dbReference type="HOGENOM" id="CLU_045663_0_0_9"/>
<dbReference type="UniPathway" id="UPA00145">
    <property type="reaction ID" value="UER00565"/>
</dbReference>
<dbReference type="Proteomes" id="UP000001578">
    <property type="component" value="Chromosome"/>
</dbReference>
<dbReference type="GO" id="GO:0005829">
    <property type="term" value="C:cytosol"/>
    <property type="evidence" value="ECO:0007669"/>
    <property type="project" value="TreeGrafter"/>
</dbReference>
<dbReference type="GO" id="GO:0008733">
    <property type="term" value="F:L-arabinose isomerase activity"/>
    <property type="evidence" value="ECO:0007669"/>
    <property type="project" value="UniProtKB-UniRule"/>
</dbReference>
<dbReference type="GO" id="GO:0030145">
    <property type="term" value="F:manganese ion binding"/>
    <property type="evidence" value="ECO:0007669"/>
    <property type="project" value="UniProtKB-UniRule"/>
</dbReference>
<dbReference type="GO" id="GO:0019569">
    <property type="term" value="P:L-arabinose catabolic process to xylulose 5-phosphate"/>
    <property type="evidence" value="ECO:0007669"/>
    <property type="project" value="UniProtKB-UniRule"/>
</dbReference>
<dbReference type="CDD" id="cd03557">
    <property type="entry name" value="L-arabinose_isomerase"/>
    <property type="match status" value="1"/>
</dbReference>
<dbReference type="Gene3D" id="3.40.50.10940">
    <property type="match status" value="1"/>
</dbReference>
<dbReference type="HAMAP" id="MF_00519">
    <property type="entry name" value="Arabinose_Isome"/>
    <property type="match status" value="1"/>
</dbReference>
<dbReference type="InterPro" id="IPR024664">
    <property type="entry name" value="Ara_Isoase_C"/>
</dbReference>
<dbReference type="InterPro" id="IPR055390">
    <property type="entry name" value="AraA_central"/>
</dbReference>
<dbReference type="InterPro" id="IPR055389">
    <property type="entry name" value="AraA_N"/>
</dbReference>
<dbReference type="InterPro" id="IPR038583">
    <property type="entry name" value="AraA_N_sf"/>
</dbReference>
<dbReference type="InterPro" id="IPR004216">
    <property type="entry name" value="Fuc/Ara_isomerase_C"/>
</dbReference>
<dbReference type="InterPro" id="IPR009015">
    <property type="entry name" value="Fucose_isomerase_N/cen_sf"/>
</dbReference>
<dbReference type="InterPro" id="IPR003762">
    <property type="entry name" value="Lara_isomerase"/>
</dbReference>
<dbReference type="NCBIfam" id="NF002795">
    <property type="entry name" value="PRK02929.1"/>
    <property type="match status" value="1"/>
</dbReference>
<dbReference type="PANTHER" id="PTHR38464">
    <property type="entry name" value="L-ARABINOSE ISOMERASE"/>
    <property type="match status" value="1"/>
</dbReference>
<dbReference type="PANTHER" id="PTHR38464:SF1">
    <property type="entry name" value="L-ARABINOSE ISOMERASE"/>
    <property type="match status" value="1"/>
</dbReference>
<dbReference type="Pfam" id="PF24856">
    <property type="entry name" value="AraA_central"/>
    <property type="match status" value="1"/>
</dbReference>
<dbReference type="Pfam" id="PF02610">
    <property type="entry name" value="AraA_N"/>
    <property type="match status" value="1"/>
</dbReference>
<dbReference type="Pfam" id="PF11762">
    <property type="entry name" value="Arabinose_Iso_C"/>
    <property type="match status" value="1"/>
</dbReference>
<dbReference type="PIRSF" id="PIRSF001478">
    <property type="entry name" value="L-ara_isomerase"/>
    <property type="match status" value="1"/>
</dbReference>
<dbReference type="SUPFAM" id="SSF50443">
    <property type="entry name" value="FucI/AraA C-terminal domain-like"/>
    <property type="match status" value="1"/>
</dbReference>
<dbReference type="SUPFAM" id="SSF53743">
    <property type="entry name" value="FucI/AraA N-terminal and middle domains"/>
    <property type="match status" value="1"/>
</dbReference>
<sequence length="496" mass="55899">MLSLRPYEFWFVTGSQHLYGEEALKQVEEHSRTIVNELNRDSVFPFPLVFKPIVTTPEEIRNICLEANASEQCAGVVTWMHTFSPAKMWIGGLLELRKPLLHLHTQFNRDIPWDSIDMDFMNLNQSAHGDREYGFIGARMGVARKVVVGHWEDPEVRERLAKWMRTAVAFAESRHLKVARFGDNMREVAVTEGDKVGAQIQFGWSINGYGIGDLVQSIRDVSEQSVNELLDEYAELYDIVPAGRQDGPVRESIREQARIELGLKAFLQDGNFTAFTTTFEDLHGMKQLPGLAVQRLMAEGYGFGGEGDWKTAALVRLMKVMADGKGTSFMEDYTYHFEPGNEMILGAHMLEVCPTIAATRPRIEVHPLSIGGKEDPARLVFDGGEGAAVNASLIDLGHRFRLIVNEVDAVKPEFDMLKLPVARILWKPRPSLRDSAEAWILAGGAHHTCFSFAVTAEQLEDFAEMTGIECVVINEHTSVSSFKNELRWNEVFWRGR</sequence>
<feature type="chain" id="PRO_0000312607" description="L-arabinose isomerase">
    <location>
        <begin position="1"/>
        <end position="496"/>
    </location>
</feature>
<feature type="binding site" evidence="1">
    <location>
        <position position="306"/>
    </location>
    <ligand>
        <name>Mn(2+)</name>
        <dbReference type="ChEBI" id="CHEBI:29035"/>
    </ligand>
</feature>
<feature type="binding site" evidence="1">
    <location>
        <position position="331"/>
    </location>
    <ligand>
        <name>Mn(2+)</name>
        <dbReference type="ChEBI" id="CHEBI:29035"/>
    </ligand>
</feature>
<feature type="binding site" evidence="1">
    <location>
        <position position="348"/>
    </location>
    <ligand>
        <name>Mn(2+)</name>
        <dbReference type="ChEBI" id="CHEBI:29035"/>
    </ligand>
</feature>
<feature type="binding site" evidence="1">
    <location>
        <position position="447"/>
    </location>
    <ligand>
        <name>Mn(2+)</name>
        <dbReference type="ChEBI" id="CHEBI:29035"/>
    </ligand>
</feature>
<gene>
    <name evidence="1" type="primary">araA</name>
    <name type="ordered locus">GTNG_1795</name>
</gene>
<protein>
    <recommendedName>
        <fullName evidence="1">L-arabinose isomerase</fullName>
        <ecNumber evidence="1">5.3.1.4</ecNumber>
    </recommendedName>
</protein>
<reference key="1">
    <citation type="journal article" date="2007" name="Proc. Natl. Acad. Sci. U.S.A.">
        <title>Genome and proteome of long-chain alkane degrading Geobacillus thermodenitrificans NG80-2 isolated from a deep-subsurface oil reservoir.</title>
        <authorList>
            <person name="Feng L."/>
            <person name="Wang W."/>
            <person name="Cheng J."/>
            <person name="Ren Y."/>
            <person name="Zhao G."/>
            <person name="Gao C."/>
            <person name="Tang Y."/>
            <person name="Liu X."/>
            <person name="Han W."/>
            <person name="Peng X."/>
            <person name="Liu R."/>
            <person name="Wang L."/>
        </authorList>
    </citation>
    <scope>NUCLEOTIDE SEQUENCE [LARGE SCALE GENOMIC DNA]</scope>
    <source>
        <strain>NG80-2</strain>
    </source>
</reference>
<accession>A4IPA1</accession>
<comment type="function">
    <text evidence="1">Catalyzes the conversion of L-arabinose to L-ribulose.</text>
</comment>
<comment type="catalytic activity">
    <reaction evidence="1">
        <text>beta-L-arabinopyranose = L-ribulose</text>
        <dbReference type="Rhea" id="RHEA:14821"/>
        <dbReference type="ChEBI" id="CHEBI:16880"/>
        <dbReference type="ChEBI" id="CHEBI:40886"/>
        <dbReference type="EC" id="5.3.1.4"/>
    </reaction>
</comment>
<comment type="cofactor">
    <cofactor evidence="1">
        <name>Mn(2+)</name>
        <dbReference type="ChEBI" id="CHEBI:29035"/>
    </cofactor>
    <text evidence="1">Binds 1 Mn(2+) ion per subunit.</text>
</comment>
<comment type="pathway">
    <text evidence="1">Carbohydrate degradation; L-arabinose degradation via L-ribulose; D-xylulose 5-phosphate from L-arabinose (bacterial route): step 1/3.</text>
</comment>
<comment type="similarity">
    <text evidence="1">Belongs to the arabinose isomerase family.</text>
</comment>
<proteinExistence type="inferred from homology"/>
<name>ARAA_GEOTN</name>
<evidence type="ECO:0000255" key="1">
    <source>
        <dbReference type="HAMAP-Rule" id="MF_00519"/>
    </source>
</evidence>